<protein>
    <recommendedName>
        <fullName evidence="1">Large ribosomal subunit protein uL23</fullName>
    </recommendedName>
    <alternativeName>
        <fullName evidence="2">50S ribosomal protein L23</fullName>
    </alternativeName>
</protein>
<evidence type="ECO:0000255" key="1">
    <source>
        <dbReference type="HAMAP-Rule" id="MF_01369"/>
    </source>
</evidence>
<evidence type="ECO:0000305" key="2"/>
<reference key="1">
    <citation type="journal article" date="2006" name="Appl. Environ. Microbiol.">
        <title>Complete genome sequence of the marine, chemolithoautotrophic, ammonia-oxidizing bacterium Nitrosococcus oceani ATCC 19707.</title>
        <authorList>
            <person name="Klotz M.G."/>
            <person name="Arp D.J."/>
            <person name="Chain P.S.G."/>
            <person name="El-Sheikh A.F."/>
            <person name="Hauser L.J."/>
            <person name="Hommes N.G."/>
            <person name="Larimer F.W."/>
            <person name="Malfatti S.A."/>
            <person name="Norton J.M."/>
            <person name="Poret-Peterson A.T."/>
            <person name="Vergez L.M."/>
            <person name="Ward B.B."/>
        </authorList>
    </citation>
    <scope>NUCLEOTIDE SEQUENCE [LARGE SCALE GENOMIC DNA]</scope>
    <source>
        <strain>ATCC 19707 / BCRC 17464 / JCM 30415 / NCIMB 11848 / C-107</strain>
    </source>
</reference>
<keyword id="KW-1185">Reference proteome</keyword>
<keyword id="KW-0687">Ribonucleoprotein</keyword>
<keyword id="KW-0689">Ribosomal protein</keyword>
<keyword id="KW-0694">RNA-binding</keyword>
<keyword id="KW-0699">rRNA-binding</keyword>
<organism>
    <name type="scientific">Nitrosococcus oceani (strain ATCC 19707 / BCRC 17464 / JCM 30415 / NCIMB 11848 / C-107)</name>
    <dbReference type="NCBI Taxonomy" id="323261"/>
    <lineage>
        <taxon>Bacteria</taxon>
        <taxon>Pseudomonadati</taxon>
        <taxon>Pseudomonadota</taxon>
        <taxon>Gammaproteobacteria</taxon>
        <taxon>Chromatiales</taxon>
        <taxon>Chromatiaceae</taxon>
        <taxon>Nitrosococcus</taxon>
    </lineage>
</organism>
<accession>Q3J8R6</accession>
<feature type="chain" id="PRO_0000272786" description="Large ribosomal subunit protein uL23">
    <location>
        <begin position="1"/>
        <end position="98"/>
    </location>
</feature>
<dbReference type="EMBL" id="CP000127">
    <property type="protein sequence ID" value="ABA58780.1"/>
    <property type="molecule type" value="Genomic_DNA"/>
</dbReference>
<dbReference type="RefSeq" id="WP_002809030.1">
    <property type="nucleotide sequence ID" value="NC_007484.1"/>
</dbReference>
<dbReference type="SMR" id="Q3J8R6"/>
<dbReference type="FunCoup" id="Q3J8R6">
    <property type="interactions" value="539"/>
</dbReference>
<dbReference type="STRING" id="323261.Noc_2322"/>
<dbReference type="KEGG" id="noc:Noc_2322"/>
<dbReference type="eggNOG" id="COG0089">
    <property type="taxonomic scope" value="Bacteria"/>
</dbReference>
<dbReference type="HOGENOM" id="CLU_037562_3_1_6"/>
<dbReference type="InParanoid" id="Q3J8R6"/>
<dbReference type="Proteomes" id="UP000006838">
    <property type="component" value="Chromosome"/>
</dbReference>
<dbReference type="GO" id="GO:1990904">
    <property type="term" value="C:ribonucleoprotein complex"/>
    <property type="evidence" value="ECO:0007669"/>
    <property type="project" value="UniProtKB-KW"/>
</dbReference>
<dbReference type="GO" id="GO:0005840">
    <property type="term" value="C:ribosome"/>
    <property type="evidence" value="ECO:0007669"/>
    <property type="project" value="UniProtKB-KW"/>
</dbReference>
<dbReference type="GO" id="GO:0019843">
    <property type="term" value="F:rRNA binding"/>
    <property type="evidence" value="ECO:0007669"/>
    <property type="project" value="UniProtKB-UniRule"/>
</dbReference>
<dbReference type="GO" id="GO:0003735">
    <property type="term" value="F:structural constituent of ribosome"/>
    <property type="evidence" value="ECO:0007669"/>
    <property type="project" value="InterPro"/>
</dbReference>
<dbReference type="GO" id="GO:0006412">
    <property type="term" value="P:translation"/>
    <property type="evidence" value="ECO:0007669"/>
    <property type="project" value="UniProtKB-UniRule"/>
</dbReference>
<dbReference type="FunFam" id="3.30.70.330:FF:000001">
    <property type="entry name" value="50S ribosomal protein L23"/>
    <property type="match status" value="1"/>
</dbReference>
<dbReference type="Gene3D" id="3.30.70.330">
    <property type="match status" value="1"/>
</dbReference>
<dbReference type="HAMAP" id="MF_01369_B">
    <property type="entry name" value="Ribosomal_uL23_B"/>
    <property type="match status" value="1"/>
</dbReference>
<dbReference type="InterPro" id="IPR012677">
    <property type="entry name" value="Nucleotide-bd_a/b_plait_sf"/>
</dbReference>
<dbReference type="InterPro" id="IPR013025">
    <property type="entry name" value="Ribosomal_uL23-like"/>
</dbReference>
<dbReference type="InterPro" id="IPR012678">
    <property type="entry name" value="Ribosomal_uL23/eL15/eS24_sf"/>
</dbReference>
<dbReference type="NCBIfam" id="NF004359">
    <property type="entry name" value="PRK05738.1-3"/>
    <property type="match status" value="1"/>
</dbReference>
<dbReference type="NCBIfam" id="NF004363">
    <property type="entry name" value="PRK05738.2-4"/>
    <property type="match status" value="1"/>
</dbReference>
<dbReference type="PANTHER" id="PTHR11620">
    <property type="entry name" value="60S RIBOSOMAL PROTEIN L23A"/>
    <property type="match status" value="1"/>
</dbReference>
<dbReference type="Pfam" id="PF00276">
    <property type="entry name" value="Ribosomal_L23"/>
    <property type="match status" value="1"/>
</dbReference>
<dbReference type="SUPFAM" id="SSF54189">
    <property type="entry name" value="Ribosomal proteins S24e, L23 and L15e"/>
    <property type="match status" value="1"/>
</dbReference>
<gene>
    <name evidence="1" type="primary">rplW</name>
    <name type="ordered locus">Noc_2322</name>
</gene>
<comment type="function">
    <text evidence="1">One of the early assembly proteins it binds 23S rRNA. One of the proteins that surrounds the polypeptide exit tunnel on the outside of the ribosome. Forms the main docking site for trigger factor binding to the ribosome.</text>
</comment>
<comment type="subunit">
    <text evidence="1">Part of the 50S ribosomal subunit. Contacts protein L29, and trigger factor when it is bound to the ribosome.</text>
</comment>
<comment type="similarity">
    <text evidence="1">Belongs to the universal ribosomal protein uL23 family.</text>
</comment>
<name>RL23_NITOC</name>
<proteinExistence type="inferred from homology"/>
<sequence length="98" mass="11230">MNEERLTKVILAPVISEKSTLVGEKHNQVIFKILSDADKREVKQAVELLFDVKVTKVHTALVKGKRKRSGRYIGRRSNWKKAYVALQEGYEIDFASVE</sequence>